<reference key="1">
    <citation type="journal article" date="2000" name="Nature">
        <title>Sequence and analysis of chromosome 1 of the plant Arabidopsis thaliana.</title>
        <authorList>
            <person name="Theologis A."/>
            <person name="Ecker J.R."/>
            <person name="Palm C.J."/>
            <person name="Federspiel N.A."/>
            <person name="Kaul S."/>
            <person name="White O."/>
            <person name="Alonso J."/>
            <person name="Altafi H."/>
            <person name="Araujo R."/>
            <person name="Bowman C.L."/>
            <person name="Brooks S.Y."/>
            <person name="Buehler E."/>
            <person name="Chan A."/>
            <person name="Chao Q."/>
            <person name="Chen H."/>
            <person name="Cheuk R.F."/>
            <person name="Chin C.W."/>
            <person name="Chung M.K."/>
            <person name="Conn L."/>
            <person name="Conway A.B."/>
            <person name="Conway A.R."/>
            <person name="Creasy T.H."/>
            <person name="Dewar K."/>
            <person name="Dunn P."/>
            <person name="Etgu P."/>
            <person name="Feldblyum T.V."/>
            <person name="Feng J.-D."/>
            <person name="Fong B."/>
            <person name="Fujii C.Y."/>
            <person name="Gill J.E."/>
            <person name="Goldsmith A.D."/>
            <person name="Haas B."/>
            <person name="Hansen N.F."/>
            <person name="Hughes B."/>
            <person name="Huizar L."/>
            <person name="Hunter J.L."/>
            <person name="Jenkins J."/>
            <person name="Johnson-Hopson C."/>
            <person name="Khan S."/>
            <person name="Khaykin E."/>
            <person name="Kim C.J."/>
            <person name="Koo H.L."/>
            <person name="Kremenetskaia I."/>
            <person name="Kurtz D.B."/>
            <person name="Kwan A."/>
            <person name="Lam B."/>
            <person name="Langin-Hooper S."/>
            <person name="Lee A."/>
            <person name="Lee J.M."/>
            <person name="Lenz C.A."/>
            <person name="Li J.H."/>
            <person name="Li Y.-P."/>
            <person name="Lin X."/>
            <person name="Liu S.X."/>
            <person name="Liu Z.A."/>
            <person name="Luros J.S."/>
            <person name="Maiti R."/>
            <person name="Marziali A."/>
            <person name="Militscher J."/>
            <person name="Miranda M."/>
            <person name="Nguyen M."/>
            <person name="Nierman W.C."/>
            <person name="Osborne B.I."/>
            <person name="Pai G."/>
            <person name="Peterson J."/>
            <person name="Pham P.K."/>
            <person name="Rizzo M."/>
            <person name="Rooney T."/>
            <person name="Rowley D."/>
            <person name="Sakano H."/>
            <person name="Salzberg S.L."/>
            <person name="Schwartz J.R."/>
            <person name="Shinn P."/>
            <person name="Southwick A.M."/>
            <person name="Sun H."/>
            <person name="Tallon L.J."/>
            <person name="Tambunga G."/>
            <person name="Toriumi M.J."/>
            <person name="Town C.D."/>
            <person name="Utterback T."/>
            <person name="Van Aken S."/>
            <person name="Vaysberg M."/>
            <person name="Vysotskaia V.S."/>
            <person name="Walker M."/>
            <person name="Wu D."/>
            <person name="Yu G."/>
            <person name="Fraser C.M."/>
            <person name="Venter J.C."/>
            <person name="Davis R.W."/>
        </authorList>
    </citation>
    <scope>NUCLEOTIDE SEQUENCE [LARGE SCALE GENOMIC DNA]</scope>
    <source>
        <strain>cv. Columbia</strain>
    </source>
</reference>
<reference key="2">
    <citation type="journal article" date="2017" name="Plant J.">
        <title>Araport11: a complete reannotation of the Arabidopsis thaliana reference genome.</title>
        <authorList>
            <person name="Cheng C.Y."/>
            <person name="Krishnakumar V."/>
            <person name="Chan A.P."/>
            <person name="Thibaud-Nissen F."/>
            <person name="Schobel S."/>
            <person name="Town C.D."/>
        </authorList>
    </citation>
    <scope>GENOME REANNOTATION</scope>
    <source>
        <strain>cv. Columbia</strain>
    </source>
</reference>
<reference key="3">
    <citation type="submission" date="2004-04" db="EMBL/GenBank/DDBJ databases">
        <title>Arabidopsis ORF clones.</title>
        <authorList>
            <person name="Shinn P."/>
            <person name="Chen H."/>
            <person name="Cheuk R.F."/>
            <person name="Kim C.J."/>
            <person name="Ecker J.R."/>
        </authorList>
    </citation>
    <scope>NUCLEOTIDE SEQUENCE [LARGE SCALE MRNA] OF 1-235</scope>
    <source>
        <strain>cv. Columbia</strain>
    </source>
</reference>
<reference key="4">
    <citation type="submission" date="2003-12" db="EMBL/GenBank/DDBJ databases">
        <title>Arabidopsis ORF clones.</title>
        <authorList>
            <person name="Kim C.J."/>
            <person name="Chen H."/>
            <person name="Cheuk R.F."/>
            <person name="Shinn P."/>
            <person name="Ecker J.R."/>
        </authorList>
    </citation>
    <scope>NUCLEOTIDE SEQUENCE [LARGE SCALE MRNA] OF 250-550</scope>
    <source>
        <strain>cv. Columbia</strain>
    </source>
</reference>
<reference key="5">
    <citation type="journal article" date="2002" name="Plant Physiol.">
        <title>Inositol phospholipid metabolism in Arabidopsis. Characterized and putative isoforms of inositol phospholipid kinase and phosphoinositide-specific phospholipase C.</title>
        <authorList>
            <person name="Mueller-Roeber B."/>
            <person name="Pical C."/>
        </authorList>
    </citation>
    <scope>GENE FAMILY</scope>
    <scope>NOMENCLATURE</scope>
</reference>
<reference key="6">
    <citation type="journal article" date="2008" name="Biochem. J.">
        <title>Characterization of a new family of protein kinases from Arabidopsis containing phosphoinositide 3/4-kinase and ubiquitin-like domains.</title>
        <authorList>
            <person name="Galvao R.M."/>
            <person name="Kota U."/>
            <person name="Soderblom E.J."/>
            <person name="Goshe M.B."/>
            <person name="Boss W.F."/>
        </authorList>
    </citation>
    <scope>GENE FAMILY</scope>
</reference>
<reference key="7">
    <citation type="journal article" date="2013" name="Biochem. J.">
        <title>Identification of novel candidate phosphatidic acid-binding proteins involved in the salt-stress response of Arabidopsis thaliana roots.</title>
        <authorList>
            <person name="McLoughlin F."/>
            <person name="Arisz S.A."/>
            <person name="Dekker H.L."/>
            <person name="Kramer G."/>
            <person name="de Koster C.G."/>
            <person name="Haring M.A."/>
            <person name="Munnik T."/>
            <person name="Testerink C."/>
        </authorList>
    </citation>
    <scope>IDENTIFICATION BY MASS SPECTROMETRY</scope>
    <scope>INDUCTION</scope>
    <scope>SUBCELLULAR LOCATION</scope>
</reference>
<feature type="chain" id="PRO_0000423360" description="Phosphatidylinositol 4-kinase gamma 2">
    <location>
        <begin position="1"/>
        <end position="550"/>
    </location>
</feature>
<feature type="domain" description="Ubiquitin-like 1" evidence="3">
    <location>
        <begin position="34"/>
        <end position="111"/>
    </location>
</feature>
<feature type="domain" description="Ubiquitin-like 2" evidence="3">
    <location>
        <begin position="112"/>
        <end position="190"/>
    </location>
</feature>
<feature type="domain" description="PI3K/PI4K catalytic" evidence="4">
    <location>
        <begin position="234"/>
        <end position="532"/>
    </location>
</feature>
<feature type="region of interest" description="Disordered" evidence="5">
    <location>
        <begin position="228"/>
        <end position="247"/>
    </location>
</feature>
<feature type="region of interest" description="G-loop" evidence="4">
    <location>
        <begin position="240"/>
        <end position="246"/>
    </location>
</feature>
<feature type="region of interest" description="Catalytic loop" evidence="4">
    <location>
        <begin position="392"/>
        <end position="400"/>
    </location>
</feature>
<feature type="region of interest" description="Activation loop" evidence="4">
    <location>
        <begin position="415"/>
        <end position="441"/>
    </location>
</feature>
<feature type="binding site" evidence="2">
    <location>
        <begin position="241"/>
        <end position="247"/>
    </location>
    <ligand>
        <name>ATP</name>
        <dbReference type="ChEBI" id="CHEBI:30616"/>
    </ligand>
</feature>
<feature type="binding site" evidence="2">
    <location>
        <position position="263"/>
    </location>
    <ligand>
        <name>ATP</name>
        <dbReference type="ChEBI" id="CHEBI:30616"/>
    </ligand>
</feature>
<feature type="binding site" evidence="2">
    <location>
        <begin position="359"/>
        <end position="362"/>
    </location>
    <ligand>
        <name>ATP</name>
        <dbReference type="ChEBI" id="CHEBI:30616"/>
    </ligand>
</feature>
<feature type="binding site" evidence="2">
    <location>
        <position position="417"/>
    </location>
    <ligand>
        <name>ATP</name>
        <dbReference type="ChEBI" id="CHEBI:30616"/>
    </ligand>
</feature>
<proteinExistence type="evidence at protein level"/>
<evidence type="ECO:0000250" key="1"/>
<evidence type="ECO:0000250" key="2">
    <source>
        <dbReference type="UniProtKB" id="Q9BTU6"/>
    </source>
</evidence>
<evidence type="ECO:0000255" key="3">
    <source>
        <dbReference type="PROSITE-ProRule" id="PRU00214"/>
    </source>
</evidence>
<evidence type="ECO:0000255" key="4">
    <source>
        <dbReference type="PROSITE-ProRule" id="PRU00269"/>
    </source>
</evidence>
<evidence type="ECO:0000256" key="5">
    <source>
        <dbReference type="SAM" id="MobiDB-lite"/>
    </source>
</evidence>
<evidence type="ECO:0000269" key="6">
    <source>
    </source>
</evidence>
<evidence type="ECO:0000305" key="7"/>
<keyword id="KW-0067">ATP-binding</keyword>
<keyword id="KW-0418">Kinase</keyword>
<keyword id="KW-0472">Membrane</keyword>
<keyword id="KW-0547">Nucleotide-binding</keyword>
<keyword id="KW-1185">Reference proteome</keyword>
<keyword id="KW-0677">Repeat</keyword>
<keyword id="KW-0808">Transferase</keyword>
<dbReference type="EC" id="2.7.1.67"/>
<dbReference type="EMBL" id="AC009519">
    <property type="protein sequence ID" value="AAF19692.1"/>
    <property type="status" value="ALT_SEQ"/>
    <property type="molecule type" value="Genomic_DNA"/>
</dbReference>
<dbReference type="EMBL" id="CP002684">
    <property type="status" value="NOT_ANNOTATED_CDS"/>
    <property type="molecule type" value="Genomic_DNA"/>
</dbReference>
<dbReference type="EMBL" id="BT012211">
    <property type="protein sequence ID" value="AAS76698.1"/>
    <property type="status" value="ALT_FRAME"/>
    <property type="molecule type" value="mRNA"/>
</dbReference>
<dbReference type="EMBL" id="BT012395">
    <property type="protein sequence ID" value="AAS88785.1"/>
    <property type="status" value="ALT_FRAME"/>
    <property type="molecule type" value="mRNA"/>
</dbReference>
<dbReference type="EMBL" id="BT010909">
    <property type="protein sequence ID" value="AAR24687.1"/>
    <property type="molecule type" value="mRNA"/>
</dbReference>
<dbReference type="SMR" id="Q9SGW8"/>
<dbReference type="BioGRID" id="27975">
    <property type="interactions" value="1"/>
</dbReference>
<dbReference type="FunCoup" id="Q9SGW8">
    <property type="interactions" value="486"/>
</dbReference>
<dbReference type="IntAct" id="Q9SGW8">
    <property type="interactions" value="1"/>
</dbReference>
<dbReference type="STRING" id="3702.Q9SGW8"/>
<dbReference type="PaxDb" id="3702-AT1G64460.1"/>
<dbReference type="PeptideAtlas" id="Q9SGW8"/>
<dbReference type="ProteomicsDB" id="250812"/>
<dbReference type="Araport" id="AT1G64460"/>
<dbReference type="TAIR" id="AT1G64460"/>
<dbReference type="eggNOG" id="KOG2381">
    <property type="taxonomic scope" value="Eukaryota"/>
</dbReference>
<dbReference type="HOGENOM" id="CLU_059282_0_0_1"/>
<dbReference type="InParanoid" id="Q9SGW8"/>
<dbReference type="PRO" id="PR:Q9SGW8"/>
<dbReference type="Proteomes" id="UP000006548">
    <property type="component" value="Chromosome 1"/>
</dbReference>
<dbReference type="ExpressionAtlas" id="Q9SGW8">
    <property type="expression patterns" value="baseline and differential"/>
</dbReference>
<dbReference type="GO" id="GO:0005737">
    <property type="term" value="C:cytoplasm"/>
    <property type="evidence" value="ECO:0000314"/>
    <property type="project" value="TAIR"/>
</dbReference>
<dbReference type="GO" id="GO:0016020">
    <property type="term" value="C:membrane"/>
    <property type="evidence" value="ECO:0007669"/>
    <property type="project" value="UniProtKB-SubCell"/>
</dbReference>
<dbReference type="GO" id="GO:0005634">
    <property type="term" value="C:nucleus"/>
    <property type="evidence" value="ECO:0000314"/>
    <property type="project" value="TAIR"/>
</dbReference>
<dbReference type="GO" id="GO:0000325">
    <property type="term" value="C:plant-type vacuole"/>
    <property type="evidence" value="ECO:0007005"/>
    <property type="project" value="TAIR"/>
</dbReference>
<dbReference type="GO" id="GO:0004430">
    <property type="term" value="F:1-phosphatidylinositol 4-kinase activity"/>
    <property type="evidence" value="ECO:0007669"/>
    <property type="project" value="UniProtKB-EC"/>
</dbReference>
<dbReference type="GO" id="GO:0005524">
    <property type="term" value="F:ATP binding"/>
    <property type="evidence" value="ECO:0007669"/>
    <property type="project" value="UniProtKB-KW"/>
</dbReference>
<dbReference type="GO" id="GO:0034051">
    <property type="term" value="P:negative regulation of plant-type hypersensitive response"/>
    <property type="evidence" value="ECO:0000315"/>
    <property type="project" value="TAIR"/>
</dbReference>
<dbReference type="GO" id="GO:0050821">
    <property type="term" value="P:protein stabilization"/>
    <property type="evidence" value="ECO:0000270"/>
    <property type="project" value="TAIR"/>
</dbReference>
<dbReference type="GO" id="GO:0009651">
    <property type="term" value="P:response to salt stress"/>
    <property type="evidence" value="ECO:0000314"/>
    <property type="project" value="UniProtKB"/>
</dbReference>
<dbReference type="GO" id="GO:0048364">
    <property type="term" value="P:root development"/>
    <property type="evidence" value="ECO:0000315"/>
    <property type="project" value="TAIR"/>
</dbReference>
<dbReference type="CDD" id="cd17039">
    <property type="entry name" value="Ubl_ubiquitin_like"/>
    <property type="match status" value="1"/>
</dbReference>
<dbReference type="CDD" id="cd01802">
    <property type="entry name" value="Ubl_ZFAND4"/>
    <property type="match status" value="1"/>
</dbReference>
<dbReference type="FunFam" id="3.10.20.90:FF:000307">
    <property type="entry name" value="Phosphatidylinositol 4-kinase gamma 4"/>
    <property type="match status" value="1"/>
</dbReference>
<dbReference type="Gene3D" id="3.10.20.90">
    <property type="entry name" value="Phosphatidylinositol 3-kinase Catalytic Subunit, Chain A, domain 1"/>
    <property type="match status" value="2"/>
</dbReference>
<dbReference type="InterPro" id="IPR044571">
    <property type="entry name" value="P4KG1-8"/>
</dbReference>
<dbReference type="InterPro" id="IPR000403">
    <property type="entry name" value="PI3/4_kinase_cat_dom"/>
</dbReference>
<dbReference type="InterPro" id="IPR000626">
    <property type="entry name" value="Ubiquitin-like_dom"/>
</dbReference>
<dbReference type="InterPro" id="IPR029071">
    <property type="entry name" value="Ubiquitin-like_domsf"/>
</dbReference>
<dbReference type="PANTHER" id="PTHR45800">
    <property type="entry name" value="PHOSPHATIDYLINOSITOL 4-KINASE GAMMA"/>
    <property type="match status" value="1"/>
</dbReference>
<dbReference type="PANTHER" id="PTHR45800:SF5">
    <property type="entry name" value="PHOSPHATIDYLINOSITOL 4-KINASE GAMMA 2"/>
    <property type="match status" value="1"/>
</dbReference>
<dbReference type="Pfam" id="PF00454">
    <property type="entry name" value="PI3_PI4_kinase"/>
    <property type="match status" value="1"/>
</dbReference>
<dbReference type="Pfam" id="PF00240">
    <property type="entry name" value="ubiquitin"/>
    <property type="match status" value="2"/>
</dbReference>
<dbReference type="SMART" id="SM00213">
    <property type="entry name" value="UBQ"/>
    <property type="match status" value="2"/>
</dbReference>
<dbReference type="SUPFAM" id="SSF54236">
    <property type="entry name" value="Ubiquitin-like"/>
    <property type="match status" value="2"/>
</dbReference>
<dbReference type="PROSITE" id="PS50290">
    <property type="entry name" value="PI3_4_KINASE_3"/>
    <property type="match status" value="1"/>
</dbReference>
<dbReference type="PROSITE" id="PS50053">
    <property type="entry name" value="UBIQUITIN_2"/>
    <property type="match status" value="2"/>
</dbReference>
<protein>
    <recommendedName>
        <fullName>Phosphatidylinositol 4-kinase gamma 2</fullName>
        <shortName>AtPI4Kgamma2</shortName>
        <shortName>PI-4Kgamma2</shortName>
        <shortName>PI4K gamma 2</shortName>
        <ecNumber>2.7.1.67</ecNumber>
    </recommendedName>
</protein>
<organism>
    <name type="scientific">Arabidopsis thaliana</name>
    <name type="common">Mouse-ear cress</name>
    <dbReference type="NCBI Taxonomy" id="3702"/>
    <lineage>
        <taxon>Eukaryota</taxon>
        <taxon>Viridiplantae</taxon>
        <taxon>Streptophyta</taxon>
        <taxon>Embryophyta</taxon>
        <taxon>Tracheophyta</taxon>
        <taxon>Spermatophyta</taxon>
        <taxon>Magnoliopsida</taxon>
        <taxon>eudicotyledons</taxon>
        <taxon>Gunneridae</taxon>
        <taxon>Pentapetalae</taxon>
        <taxon>rosids</taxon>
        <taxon>malvids</taxon>
        <taxon>Brassicales</taxon>
        <taxon>Brassicaceae</taxon>
        <taxon>Camelineae</taxon>
        <taxon>Arabidopsis</taxon>
    </lineage>
</organism>
<accession>Q9SGW8</accession>
<accession>Q6NLD9</accession>
<accession>Q6NPL1</accession>
<comment type="function">
    <text evidence="1">The phosphorylation of phosphatidylinositol (PI) to PI4P is the first committed step in the generation of phosphatidylinositol 4,5-bisphosphate (PIP2), a precursor of the second messenger inositol 1,4,5-trisphosphate (InsP3).</text>
</comment>
<comment type="catalytic activity">
    <reaction>
        <text>a 1,2-diacyl-sn-glycero-3-phospho-(1D-myo-inositol) + ATP = a 1,2-diacyl-sn-glycero-3-phospho-(1D-myo-inositol 4-phosphate) + ADP + H(+)</text>
        <dbReference type="Rhea" id="RHEA:19877"/>
        <dbReference type="ChEBI" id="CHEBI:15378"/>
        <dbReference type="ChEBI" id="CHEBI:30616"/>
        <dbReference type="ChEBI" id="CHEBI:57880"/>
        <dbReference type="ChEBI" id="CHEBI:58178"/>
        <dbReference type="ChEBI" id="CHEBI:456216"/>
        <dbReference type="EC" id="2.7.1.67"/>
    </reaction>
</comment>
<comment type="subcellular location">
    <subcellularLocation>
        <location evidence="6">Membrane</location>
        <topology evidence="6">Peripheral membrane protein</topology>
        <orientation evidence="6">Cytoplasmic side</orientation>
    </subcellularLocation>
</comment>
<comment type="induction">
    <text evidence="6">By salt.</text>
</comment>
<comment type="similarity">
    <text evidence="7">Belongs to the PI3/PI4-kinase family. Type II PI4K subfamily.</text>
</comment>
<comment type="sequence caution" evidence="7">
    <conflict type="erroneous gene model prediction">
        <sequence resource="EMBL-CDS" id="AAF19692"/>
    </conflict>
</comment>
<comment type="sequence caution" evidence="7">
    <conflict type="frameshift">
        <sequence resource="EMBL-CDS" id="AAF19692"/>
    </conflict>
</comment>
<comment type="sequence caution" evidence="7">
    <conflict type="frameshift">
        <sequence resource="EMBL-CDS" id="AAS76698"/>
    </conflict>
</comment>
<comment type="sequence caution" evidence="7">
    <conflict type="frameshift">
        <sequence resource="EMBL-CDS" id="AAS88785"/>
    </conflict>
</comment>
<sequence>MSVADVALSPIHRGSAFAVGGFGQSTTTHYSVKSVLVFLSVSGSTMPMLILESDSIAEVKLRIQTCNGFRVRRQKLVFSGRELARNASRVKDYGVTGGSVLHLVLKLYDPLLVTVITTCGKVFQFHVDRRRNVGYLKKRISKEGKGFPEVDDQEILFKGEKLDDNRIIDGICKDGNSVIHLLVKKSVEDTVKREEDTATGKDSLLEPVVLNPDVKLPEVLEDMIDRTVDGLNKGSPPVRSAEGTGGTYLMQDSSGLNYVSVFKPMDEEPMAVNNPQQLPVSSDGQGLKRGTRVGEGATREVAAYLLDHPKSGLRSVSKEVMGFAGVPPTAMVRSSHKVYNYPNGFSSCATKDAKVGSLQMFMKNNGSCEDIGPGAFPVEEVHKICVFDIRMANADRHAGNILTGKSEEGKTLLIPIDHGYCLPENFEDCTFEWLYWPQAKLPFSADTIDYINSLDSEQDIALLQLHGWNVPEAVSRTLRISTMLLKKGVERNLTPYQIGSVMCRETVNKDSAIEEIVREAHNSVLPASSEATFLEAVSVAMDRRLDELTK</sequence>
<name>P4KG2_ARATH</name>
<gene>
    <name type="primary">PI4KG2</name>
    <name type="synonym">PI4KGAMMA2</name>
    <name type="ordered locus">At1g64460/At1g64470</name>
    <name type="ORF">F1N19.4/F1N19.30</name>
</gene>